<proteinExistence type="inferred from homology"/>
<evidence type="ECO:0000255" key="1">
    <source>
        <dbReference type="HAMAP-Rule" id="MF_01705"/>
    </source>
</evidence>
<evidence type="ECO:0000255" key="2">
    <source>
        <dbReference type="PROSITE-ProRule" id="PRU01213"/>
    </source>
</evidence>
<feature type="chain" id="PRO_0000092531" description="Molybdenum import ATP-binding protein ModC">
    <location>
        <begin position="1"/>
        <end position="369"/>
    </location>
</feature>
<feature type="domain" description="ABC transporter" evidence="1">
    <location>
        <begin position="7"/>
        <end position="243"/>
    </location>
</feature>
<feature type="domain" description="Mop" evidence="2">
    <location>
        <begin position="304"/>
        <end position="369"/>
    </location>
</feature>
<feature type="binding site" evidence="1">
    <location>
        <begin position="41"/>
        <end position="48"/>
    </location>
    <ligand>
        <name>ATP</name>
        <dbReference type="ChEBI" id="CHEBI:30616"/>
    </ligand>
</feature>
<sequence>MPSDFPPGQAGIHARFRVDYPEFSLDVDLRLPGRGVTALFGQSGSGKTTCLRCMAGLAPVSDGYLDINGEVWLDSAARRAVPTHKRALGYVFQEASLFEHLDVLANLRYGMKRVPPALRRVDLEQATGLLGIGHLLARMPAGLSGGERQRVGIARALLTSPRLLLMDEPLAALDVQRKREILPYLERLHDELDIPVIYVSHSPDEVARLADHLVLLEQGRAVASGPLDALLTRLDLPMAMTDDASVVVTGEAAGFDPGYALLTLQLPGGRARLRFVHQAAPAGQRLRVVVHARDVSLALQQPREGSILNVLAVRVLEMAPAANPAHVMVRLDADGTPLLARITRYSRDRLALAPGMQAWAQIKAVSLLA</sequence>
<reference key="1">
    <citation type="journal article" date="2003" name="Nat. Genet.">
        <title>Comparative analysis of the genome sequences of Bordetella pertussis, Bordetella parapertussis and Bordetella bronchiseptica.</title>
        <authorList>
            <person name="Parkhill J."/>
            <person name="Sebaihia M."/>
            <person name="Preston A."/>
            <person name="Murphy L.D."/>
            <person name="Thomson N.R."/>
            <person name="Harris D.E."/>
            <person name="Holden M.T.G."/>
            <person name="Churcher C.M."/>
            <person name="Bentley S.D."/>
            <person name="Mungall K.L."/>
            <person name="Cerdeno-Tarraga A.-M."/>
            <person name="Temple L."/>
            <person name="James K.D."/>
            <person name="Harris B."/>
            <person name="Quail M.A."/>
            <person name="Achtman M."/>
            <person name="Atkin R."/>
            <person name="Baker S."/>
            <person name="Basham D."/>
            <person name="Bason N."/>
            <person name="Cherevach I."/>
            <person name="Chillingworth T."/>
            <person name="Collins M."/>
            <person name="Cronin A."/>
            <person name="Davis P."/>
            <person name="Doggett J."/>
            <person name="Feltwell T."/>
            <person name="Goble A."/>
            <person name="Hamlin N."/>
            <person name="Hauser H."/>
            <person name="Holroyd S."/>
            <person name="Jagels K."/>
            <person name="Leather S."/>
            <person name="Moule S."/>
            <person name="Norberczak H."/>
            <person name="O'Neil S."/>
            <person name="Ormond D."/>
            <person name="Price C."/>
            <person name="Rabbinowitsch E."/>
            <person name="Rutter S."/>
            <person name="Sanders M."/>
            <person name="Saunders D."/>
            <person name="Seeger K."/>
            <person name="Sharp S."/>
            <person name="Simmonds M."/>
            <person name="Skelton J."/>
            <person name="Squares R."/>
            <person name="Squares S."/>
            <person name="Stevens K."/>
            <person name="Unwin L."/>
            <person name="Whitehead S."/>
            <person name="Barrell B.G."/>
            <person name="Maskell D.J."/>
        </authorList>
    </citation>
    <scope>NUCLEOTIDE SEQUENCE [LARGE SCALE GENOMIC DNA]</scope>
    <source>
        <strain>12822 / ATCC BAA-587 / NCTC 13253</strain>
    </source>
</reference>
<accession>Q7W1F4</accession>
<comment type="function">
    <text evidence="1">Part of the ABC transporter complex ModABC involved in molybdenum import. Responsible for energy coupling to the transport system.</text>
</comment>
<comment type="catalytic activity">
    <reaction evidence="1">
        <text>molybdate(out) + ATP + H2O = molybdate(in) + ADP + phosphate + H(+)</text>
        <dbReference type="Rhea" id="RHEA:22020"/>
        <dbReference type="ChEBI" id="CHEBI:15377"/>
        <dbReference type="ChEBI" id="CHEBI:15378"/>
        <dbReference type="ChEBI" id="CHEBI:30616"/>
        <dbReference type="ChEBI" id="CHEBI:36264"/>
        <dbReference type="ChEBI" id="CHEBI:43474"/>
        <dbReference type="ChEBI" id="CHEBI:456216"/>
        <dbReference type="EC" id="7.3.2.5"/>
    </reaction>
</comment>
<comment type="subunit">
    <text evidence="1">The complex is composed of two ATP-binding proteins (ModC), two transmembrane proteins (ModB) and a solute-binding protein (ModA).</text>
</comment>
<comment type="subcellular location">
    <subcellularLocation>
        <location evidence="1">Cell inner membrane</location>
        <topology evidence="1">Peripheral membrane protein</topology>
    </subcellularLocation>
</comment>
<comment type="similarity">
    <text evidence="1">Belongs to the ABC transporter superfamily. Molybdate importer (TC 3.A.1.8) family.</text>
</comment>
<gene>
    <name evidence="1" type="primary">modC</name>
    <name type="ordered locus">BPP0737</name>
</gene>
<keyword id="KW-0067">ATP-binding</keyword>
<keyword id="KW-0997">Cell inner membrane</keyword>
<keyword id="KW-1003">Cell membrane</keyword>
<keyword id="KW-0472">Membrane</keyword>
<keyword id="KW-0500">Molybdenum</keyword>
<keyword id="KW-0547">Nucleotide-binding</keyword>
<keyword id="KW-1278">Translocase</keyword>
<keyword id="KW-0813">Transport</keyword>
<organism>
    <name type="scientific">Bordetella parapertussis (strain 12822 / ATCC BAA-587 / NCTC 13253)</name>
    <dbReference type="NCBI Taxonomy" id="257311"/>
    <lineage>
        <taxon>Bacteria</taxon>
        <taxon>Pseudomonadati</taxon>
        <taxon>Pseudomonadota</taxon>
        <taxon>Betaproteobacteria</taxon>
        <taxon>Burkholderiales</taxon>
        <taxon>Alcaligenaceae</taxon>
        <taxon>Bordetella</taxon>
    </lineage>
</organism>
<dbReference type="EC" id="7.3.2.5" evidence="1"/>
<dbReference type="EMBL" id="BX640425">
    <property type="protein sequence ID" value="CAE40146.1"/>
    <property type="molecule type" value="Genomic_DNA"/>
</dbReference>
<dbReference type="RefSeq" id="WP_010925958.1">
    <property type="nucleotide sequence ID" value="NC_002928.3"/>
</dbReference>
<dbReference type="SMR" id="Q7W1F4"/>
<dbReference type="GeneID" id="93202488"/>
<dbReference type="KEGG" id="bpa:BPP0737"/>
<dbReference type="HOGENOM" id="CLU_000604_1_1_4"/>
<dbReference type="Proteomes" id="UP000001421">
    <property type="component" value="Chromosome"/>
</dbReference>
<dbReference type="GO" id="GO:0005886">
    <property type="term" value="C:plasma membrane"/>
    <property type="evidence" value="ECO:0007669"/>
    <property type="project" value="UniProtKB-SubCell"/>
</dbReference>
<dbReference type="GO" id="GO:0015412">
    <property type="term" value="F:ABC-type molybdate transporter activity"/>
    <property type="evidence" value="ECO:0007669"/>
    <property type="project" value="UniProtKB-EC"/>
</dbReference>
<dbReference type="GO" id="GO:0005524">
    <property type="term" value="F:ATP binding"/>
    <property type="evidence" value="ECO:0007669"/>
    <property type="project" value="UniProtKB-KW"/>
</dbReference>
<dbReference type="GO" id="GO:0016887">
    <property type="term" value="F:ATP hydrolysis activity"/>
    <property type="evidence" value="ECO:0007669"/>
    <property type="project" value="InterPro"/>
</dbReference>
<dbReference type="Gene3D" id="2.40.50.100">
    <property type="match status" value="1"/>
</dbReference>
<dbReference type="Gene3D" id="3.40.50.300">
    <property type="entry name" value="P-loop containing nucleotide triphosphate hydrolases"/>
    <property type="match status" value="1"/>
</dbReference>
<dbReference type="InterPro" id="IPR003593">
    <property type="entry name" value="AAA+_ATPase"/>
</dbReference>
<dbReference type="InterPro" id="IPR003439">
    <property type="entry name" value="ABC_transporter-like_ATP-bd"/>
</dbReference>
<dbReference type="InterPro" id="IPR017871">
    <property type="entry name" value="ABC_transporter-like_CS"/>
</dbReference>
<dbReference type="InterPro" id="IPR008995">
    <property type="entry name" value="Mo/tungstate-bd_C_term_dom"/>
</dbReference>
<dbReference type="InterPro" id="IPR011868">
    <property type="entry name" value="ModC_ABC_ATP-bd"/>
</dbReference>
<dbReference type="InterPro" id="IPR050334">
    <property type="entry name" value="Molybdenum_import_ModC"/>
</dbReference>
<dbReference type="InterPro" id="IPR004606">
    <property type="entry name" value="Mop_domain"/>
</dbReference>
<dbReference type="InterPro" id="IPR027417">
    <property type="entry name" value="P-loop_NTPase"/>
</dbReference>
<dbReference type="InterPro" id="IPR005116">
    <property type="entry name" value="Transp-assoc_OB_typ1"/>
</dbReference>
<dbReference type="NCBIfam" id="TIGR02142">
    <property type="entry name" value="modC_ABC"/>
    <property type="match status" value="1"/>
</dbReference>
<dbReference type="PANTHER" id="PTHR43514">
    <property type="entry name" value="ABC TRANSPORTER I FAMILY MEMBER 10"/>
    <property type="match status" value="1"/>
</dbReference>
<dbReference type="PANTHER" id="PTHR43514:SF10">
    <property type="entry name" value="MOLYBDENUM IMPORT ATP-BINDING PROTEIN MODC 2"/>
    <property type="match status" value="1"/>
</dbReference>
<dbReference type="Pfam" id="PF00005">
    <property type="entry name" value="ABC_tran"/>
    <property type="match status" value="1"/>
</dbReference>
<dbReference type="Pfam" id="PF03459">
    <property type="entry name" value="TOBE"/>
    <property type="match status" value="1"/>
</dbReference>
<dbReference type="SMART" id="SM00382">
    <property type="entry name" value="AAA"/>
    <property type="match status" value="1"/>
</dbReference>
<dbReference type="SUPFAM" id="SSF50331">
    <property type="entry name" value="MOP-like"/>
    <property type="match status" value="1"/>
</dbReference>
<dbReference type="SUPFAM" id="SSF52540">
    <property type="entry name" value="P-loop containing nucleoside triphosphate hydrolases"/>
    <property type="match status" value="1"/>
</dbReference>
<dbReference type="PROSITE" id="PS00211">
    <property type="entry name" value="ABC_TRANSPORTER_1"/>
    <property type="match status" value="1"/>
</dbReference>
<dbReference type="PROSITE" id="PS50893">
    <property type="entry name" value="ABC_TRANSPORTER_2"/>
    <property type="match status" value="1"/>
</dbReference>
<dbReference type="PROSITE" id="PS51241">
    <property type="entry name" value="MODC"/>
    <property type="match status" value="1"/>
</dbReference>
<dbReference type="PROSITE" id="PS51866">
    <property type="entry name" value="MOP"/>
    <property type="match status" value="1"/>
</dbReference>
<protein>
    <recommendedName>
        <fullName evidence="1">Molybdenum import ATP-binding protein ModC</fullName>
        <ecNumber evidence="1">7.3.2.5</ecNumber>
    </recommendedName>
</protein>
<name>MODC_BORPA</name>